<organism>
    <name type="scientific">Rattus norvegicus</name>
    <name type="common">Rat</name>
    <dbReference type="NCBI Taxonomy" id="10116"/>
    <lineage>
        <taxon>Eukaryota</taxon>
        <taxon>Metazoa</taxon>
        <taxon>Chordata</taxon>
        <taxon>Craniata</taxon>
        <taxon>Vertebrata</taxon>
        <taxon>Euteleostomi</taxon>
        <taxon>Mammalia</taxon>
        <taxon>Eutheria</taxon>
        <taxon>Euarchontoglires</taxon>
        <taxon>Glires</taxon>
        <taxon>Rodentia</taxon>
        <taxon>Myomorpha</taxon>
        <taxon>Muroidea</taxon>
        <taxon>Muridae</taxon>
        <taxon>Murinae</taxon>
        <taxon>Rattus</taxon>
    </lineage>
</organism>
<dbReference type="EMBL" id="J05592">
    <property type="protein sequence ID" value="AAA41933.1"/>
    <property type="molecule type" value="mRNA"/>
</dbReference>
<dbReference type="EMBL" id="AJ276593">
    <property type="protein sequence ID" value="CAB77674.1"/>
    <property type="molecule type" value="mRNA"/>
</dbReference>
<dbReference type="EMBL" id="AY648296">
    <property type="protein sequence ID" value="AAT66740.1"/>
    <property type="molecule type" value="mRNA"/>
</dbReference>
<dbReference type="EMBL" id="BC078820">
    <property type="protein sequence ID" value="AAH78820.1"/>
    <property type="molecule type" value="mRNA"/>
</dbReference>
<dbReference type="PIR" id="A37110">
    <property type="entry name" value="A37110"/>
</dbReference>
<dbReference type="RefSeq" id="NP_073167.1">
    <property type="nucleotide sequence ID" value="NM_022676.3"/>
</dbReference>
<dbReference type="ELM" id="P19103"/>
<dbReference type="FunCoup" id="P19103">
    <property type="interactions" value="204"/>
</dbReference>
<dbReference type="STRING" id="10116.ENSRNOP00000052146"/>
<dbReference type="iPTMnet" id="P19103"/>
<dbReference type="PhosphoSitePlus" id="P19103"/>
<dbReference type="PaxDb" id="10116-ENSRNOP00000052146"/>
<dbReference type="Ensembl" id="ENSRNOT00000055271.3">
    <property type="protein sequence ID" value="ENSRNOP00000052146.2"/>
    <property type="gene ID" value="ENSRNOG00000036827.3"/>
</dbReference>
<dbReference type="GeneID" id="58977"/>
<dbReference type="KEGG" id="rno:58977"/>
<dbReference type="AGR" id="RGD:62018"/>
<dbReference type="CTD" id="5502"/>
<dbReference type="RGD" id="62018">
    <property type="gene designation" value="Ppp1r1a"/>
</dbReference>
<dbReference type="eggNOG" id="ENOG502S1WG">
    <property type="taxonomic scope" value="Eukaryota"/>
</dbReference>
<dbReference type="GeneTree" id="ENSGT00940000161232"/>
<dbReference type="HOGENOM" id="CLU_092269_1_0_1"/>
<dbReference type="InParanoid" id="P19103"/>
<dbReference type="OrthoDB" id="9940275at2759"/>
<dbReference type="PhylomeDB" id="P19103"/>
<dbReference type="TreeFam" id="TF332576"/>
<dbReference type="PRO" id="PR:P19103"/>
<dbReference type="Proteomes" id="UP000002494">
    <property type="component" value="Chromosome 7"/>
</dbReference>
<dbReference type="Bgee" id="ENSRNOG00000036827">
    <property type="expression patterns" value="Expressed in skeletal muscle tissue and 16 other cell types or tissues"/>
</dbReference>
<dbReference type="GO" id="GO:0005737">
    <property type="term" value="C:cytoplasm"/>
    <property type="evidence" value="ECO:0000318"/>
    <property type="project" value="GO_Central"/>
</dbReference>
<dbReference type="GO" id="GO:0005615">
    <property type="term" value="C:extracellular space"/>
    <property type="evidence" value="ECO:0000314"/>
    <property type="project" value="RGD"/>
</dbReference>
<dbReference type="GO" id="GO:0004864">
    <property type="term" value="F:protein phosphatase inhibitor activity"/>
    <property type="evidence" value="ECO:0007669"/>
    <property type="project" value="UniProtKB-KW"/>
</dbReference>
<dbReference type="GO" id="GO:0005977">
    <property type="term" value="P:glycogen metabolic process"/>
    <property type="evidence" value="ECO:0007669"/>
    <property type="project" value="UniProtKB-KW"/>
</dbReference>
<dbReference type="GO" id="GO:0035556">
    <property type="term" value="P:intracellular signal transduction"/>
    <property type="evidence" value="ECO:0000318"/>
    <property type="project" value="GO_Central"/>
</dbReference>
<dbReference type="InterPro" id="IPR008466">
    <property type="entry name" value="PPP1R1A/B/C"/>
</dbReference>
<dbReference type="PANTHER" id="PTHR15417:SF4">
    <property type="entry name" value="PROTEIN PHOSPHATASE 1 REGULATORY SUBUNIT 1A"/>
    <property type="match status" value="1"/>
</dbReference>
<dbReference type="PANTHER" id="PTHR15417">
    <property type="entry name" value="PROTEIN PHOSPHATASE INHIBITOR AND DOPAMINE- AND CAMP-REGULATED NEURONAL PHOSPHOPROTEIN"/>
    <property type="match status" value="1"/>
</dbReference>
<dbReference type="Pfam" id="PF05395">
    <property type="entry name" value="DARPP-32"/>
    <property type="match status" value="1"/>
</dbReference>
<proteinExistence type="evidence at protein level"/>
<evidence type="ECO:0000250" key="1"/>
<evidence type="ECO:0000250" key="2">
    <source>
        <dbReference type="UniProtKB" id="P01099"/>
    </source>
</evidence>
<evidence type="ECO:0000250" key="3">
    <source>
        <dbReference type="UniProtKB" id="Q13522"/>
    </source>
</evidence>
<evidence type="ECO:0000250" key="4">
    <source>
        <dbReference type="UniProtKB" id="Q9ERT9"/>
    </source>
</evidence>
<evidence type="ECO:0000256" key="5">
    <source>
        <dbReference type="SAM" id="MobiDB-lite"/>
    </source>
</evidence>
<evidence type="ECO:0000305" key="6"/>
<evidence type="ECO:0007744" key="7">
    <source>
    </source>
</evidence>
<comment type="function">
    <text>Inhibitor of protein-phosphatase 1. This protein may be important in hormonal control of glycogen metabolism. Hormones that elevate intracellular cAMP increase I-1 activity in many tissues. I-1 activation may impose cAMP control over proteins that are not directly phosphorylated by PKA. Following a rise in intracellular calcium, I-1 is inactivated by calcineurin (or PP2B). Does not inhibit type-2 phosphatases.</text>
</comment>
<comment type="subunit">
    <text evidence="1">Interacts with PPP1R15A.</text>
</comment>
<comment type="PTM">
    <text evidence="1">Phosphorylation of Thr-35 is required for activity.</text>
</comment>
<comment type="similarity">
    <text evidence="6">Belongs to the protein phosphatase inhibitor 1 family.</text>
</comment>
<reference key="1">
    <citation type="journal article" date="1990" name="J. Biol. Chem.">
        <title>Molecular cloning of protein phosphatase inhibitor-1 and its expression in rat and rabbit tissues.</title>
        <authorList>
            <person name="Elbrecht A."/>
            <person name="Direnzo J."/>
            <person name="Smith R.G."/>
            <person name="Shenolikar S."/>
        </authorList>
    </citation>
    <scope>NUCLEOTIDE SEQUENCE [MRNA]</scope>
    <source>
        <strain>Sprague-Dawley</strain>
        <tissue>Skeletal muscle</tissue>
    </source>
</reference>
<reference key="2">
    <citation type="journal article" date="2001" name="Mol. Cell. Biochem.">
        <title>Detection and quantification of protein phosphatase inhibitor-1 gene expression in total rat liver and isolated hepatocytes.</title>
        <authorList>
            <person name="Aleem E.A."/>
            <person name="Flohr T."/>
            <person name="Hunziker A."/>
            <person name="Mayer D."/>
            <person name="Bannasch P."/>
            <person name="Thielmann H.W."/>
        </authorList>
    </citation>
    <scope>NUCLEOTIDE SEQUENCE [MRNA]</scope>
    <source>
        <strain>Sprague-Dawley</strain>
        <tissue>Liver</tissue>
    </source>
</reference>
<reference key="3">
    <citation type="submission" date="2004-06" db="EMBL/GenBank/DDBJ databases">
        <title>Drug altered brain phosphorylation by two families of PP1 inhibitory proteins activated by PKA or PKC.</title>
        <authorList>
            <person name="Liu Q.-R."/>
            <person name="Uhl G.R."/>
        </authorList>
    </citation>
    <scope>NUCLEOTIDE SEQUENCE [MRNA]</scope>
    <source>
        <strain>Sprague-Dawley</strain>
    </source>
</reference>
<reference key="4">
    <citation type="journal article" date="2004" name="Genome Res.">
        <title>The status, quality, and expansion of the NIH full-length cDNA project: the Mammalian Gene Collection (MGC).</title>
        <authorList>
            <consortium name="The MGC Project Team"/>
        </authorList>
    </citation>
    <scope>NUCLEOTIDE SEQUENCE [LARGE SCALE MRNA]</scope>
    <source>
        <tissue>Kidney</tissue>
    </source>
</reference>
<reference key="5">
    <citation type="journal article" date="2012" name="Nat. Commun.">
        <title>Quantitative maps of protein phosphorylation sites across 14 different rat organs and tissues.</title>
        <authorList>
            <person name="Lundby A."/>
            <person name="Secher A."/>
            <person name="Lage K."/>
            <person name="Nordsborg N.B."/>
            <person name="Dmytriyev A."/>
            <person name="Lundby C."/>
            <person name="Olsen J.V."/>
        </authorList>
    </citation>
    <scope>PHOSPHORYLATION [LARGE SCALE ANALYSIS] AT SER-46; SER-47 AND SER-67</scope>
    <scope>IDENTIFICATION BY MASS SPECTROMETRY [LARGE SCALE ANALYSIS]</scope>
</reference>
<gene>
    <name type="primary">Ppp1r1a</name>
    <name type="synonym">Ipp1</name>
</gene>
<keyword id="KW-0007">Acetylation</keyword>
<keyword id="KW-0119">Carbohydrate metabolism</keyword>
<keyword id="KW-0321">Glycogen metabolism</keyword>
<keyword id="KW-0597">Phosphoprotein</keyword>
<keyword id="KW-0650">Protein phosphatase inhibitor</keyword>
<keyword id="KW-1185">Reference proteome</keyword>
<feature type="chain" id="PRO_0000071480" description="Protein phosphatase 1 regulatory subunit 1A">
    <location>
        <begin position="1"/>
        <end position="171"/>
    </location>
</feature>
<feature type="region of interest" description="Essential for activity">
    <location>
        <begin position="9"/>
        <end position="12"/>
    </location>
</feature>
<feature type="region of interest" description="Disordered" evidence="5">
    <location>
        <begin position="17"/>
        <end position="171"/>
    </location>
</feature>
<feature type="region of interest" description="Essential for activity" evidence="6">
    <location>
        <begin position="42"/>
        <end position="54"/>
    </location>
</feature>
<feature type="region of interest" description="Interaction with PPP1R15A" evidence="1">
    <location>
        <begin position="143"/>
        <end position="171"/>
    </location>
</feature>
<feature type="compositionally biased region" description="Basic and acidic residues" evidence="5">
    <location>
        <begin position="19"/>
        <end position="29"/>
    </location>
</feature>
<feature type="compositionally biased region" description="Polar residues" evidence="5">
    <location>
        <begin position="122"/>
        <end position="133"/>
    </location>
</feature>
<feature type="compositionally biased region" description="Basic and acidic residues" evidence="5">
    <location>
        <begin position="137"/>
        <end position="148"/>
    </location>
</feature>
<feature type="modified residue" description="N-acetylmethionine" evidence="2">
    <location>
        <position position="1"/>
    </location>
</feature>
<feature type="modified residue" description="Phosphothreonine; by PKA" evidence="3">
    <location>
        <position position="35"/>
    </location>
</feature>
<feature type="modified residue" description="Phosphoserine" evidence="4">
    <location>
        <position position="43"/>
    </location>
</feature>
<feature type="modified residue" description="Phosphoserine" evidence="7">
    <location>
        <position position="46"/>
    </location>
</feature>
<feature type="modified residue" description="Phosphoserine" evidence="7">
    <location>
        <position position="47"/>
    </location>
</feature>
<feature type="modified residue" description="Phosphoserine" evidence="7">
    <location>
        <position position="67"/>
    </location>
</feature>
<name>PPR1A_RAT</name>
<accession>P19103</accession>
<accession>Q6DSU5</accession>
<sequence>MEPDNSPRKIQFTVPLLEPHLDPEAAEQIRRRRPTPATLVLTSDQSSPEVDEDRIPNPLLKSTLSMSPRQRKKMTRTTPTMKELQTMVEHHLGQQKQGEEPEGATESTGNQESCPPGIPDTGSASRPDTSGTAQKPAESKPKTQEQRGVEPSTEDLSAHMLPLDSQGASLV</sequence>
<protein>
    <recommendedName>
        <fullName>Protein phosphatase 1 regulatory subunit 1A</fullName>
    </recommendedName>
    <alternativeName>
        <fullName>Protein phosphatase inhibitor 1</fullName>
        <shortName>I-1</shortName>
        <shortName>IPP-1</shortName>
    </alternativeName>
</protein>